<name>RR7_OENBI</name>
<proteinExistence type="inferred from homology"/>
<gene>
    <name type="primary">rps7-A</name>
</gene>
<gene>
    <name type="primary">rps7-B</name>
</gene>
<evidence type="ECO:0000250" key="1"/>
<evidence type="ECO:0000255" key="2">
    <source>
        <dbReference type="HAMAP-Rule" id="MF_00480"/>
    </source>
</evidence>
<evidence type="ECO:0000305" key="3"/>
<reference key="1">
    <citation type="journal article" date="2008" name="Nucleic Acids Res.">
        <title>The complete nucleotide sequences of the five genetically distinct plastid genomes of Oenothera, subsection Oenothera: I. Sequence evaluation and plastome evolution.</title>
        <authorList>
            <person name="Greiner S."/>
            <person name="Wang X."/>
            <person name="Rauwolf U."/>
            <person name="Silber M.V."/>
            <person name="Mayer K."/>
            <person name="Meurer J."/>
            <person name="Haberer G."/>
            <person name="Herrmann R.G."/>
        </authorList>
    </citation>
    <scope>NUCLEOTIDE SEQUENCE [LARGE SCALE GENOMIC DNA]</scope>
    <source>
        <strain>cv. Suaveolens Grado</strain>
    </source>
</reference>
<keyword id="KW-0150">Chloroplast</keyword>
<keyword id="KW-0934">Plastid</keyword>
<keyword id="KW-0687">Ribonucleoprotein</keyword>
<keyword id="KW-0689">Ribosomal protein</keyword>
<keyword id="KW-0694">RNA-binding</keyword>
<keyword id="KW-0699">rRNA-binding</keyword>
<sequence>MSRRGTAEEKTAKSDPIYRNRLVNMLINRILKHGKKSLAYQILYRAMKKIQQKTETNPLSVLRQAIRRVTPDIAVKARRASGSTHPVPIEIGSTQGRALAIRWLLGASRKRPGRNMAFKLSSELVDATKGRGGAIRKREETHRMAEANRAFAHFR</sequence>
<geneLocation type="chloroplast"/>
<accession>B0Z505</accession>
<protein>
    <recommendedName>
        <fullName evidence="2">Small ribosomal subunit protein uS7cz/uS7cy</fullName>
    </recommendedName>
    <alternativeName>
        <fullName>30S ribosomal protein S7, chloroplastic</fullName>
    </alternativeName>
</protein>
<feature type="chain" id="PRO_0000344353" description="Small ribosomal subunit protein uS7cz/uS7cy">
    <location>
        <begin position="1"/>
        <end position="155"/>
    </location>
</feature>
<comment type="function">
    <text evidence="1">One of the primary rRNA binding proteins, it binds directly to 16S rRNA where it nucleates assembly of the head domain of the 30S subunit.</text>
</comment>
<comment type="subunit">
    <text evidence="1">Part of the 30S ribosomal subunit.</text>
</comment>
<comment type="subcellular location">
    <subcellularLocation>
        <location>Plastid</location>
        <location>Chloroplast</location>
    </subcellularLocation>
</comment>
<comment type="similarity">
    <text evidence="3">Belongs to the universal ribosomal protein uS7 family.</text>
</comment>
<dbReference type="EMBL" id="EU262889">
    <property type="protein sequence ID" value="ABW98917.1"/>
    <property type="molecule type" value="Genomic_DNA"/>
</dbReference>
<dbReference type="EMBL" id="EU262889">
    <property type="protein sequence ID" value="ABW98930.1"/>
    <property type="molecule type" value="Genomic_DNA"/>
</dbReference>
<dbReference type="SMR" id="B0Z505"/>
<dbReference type="GO" id="GO:0009507">
    <property type="term" value="C:chloroplast"/>
    <property type="evidence" value="ECO:0007669"/>
    <property type="project" value="UniProtKB-SubCell"/>
</dbReference>
<dbReference type="GO" id="GO:0015935">
    <property type="term" value="C:small ribosomal subunit"/>
    <property type="evidence" value="ECO:0007669"/>
    <property type="project" value="InterPro"/>
</dbReference>
<dbReference type="GO" id="GO:0019843">
    <property type="term" value="F:rRNA binding"/>
    <property type="evidence" value="ECO:0007669"/>
    <property type="project" value="UniProtKB-UniRule"/>
</dbReference>
<dbReference type="GO" id="GO:0003735">
    <property type="term" value="F:structural constituent of ribosome"/>
    <property type="evidence" value="ECO:0007669"/>
    <property type="project" value="InterPro"/>
</dbReference>
<dbReference type="GO" id="GO:0006412">
    <property type="term" value="P:translation"/>
    <property type="evidence" value="ECO:0007669"/>
    <property type="project" value="UniProtKB-UniRule"/>
</dbReference>
<dbReference type="CDD" id="cd14871">
    <property type="entry name" value="uS7_Chloroplast"/>
    <property type="match status" value="1"/>
</dbReference>
<dbReference type="FunFam" id="1.10.455.10:FF:000001">
    <property type="entry name" value="30S ribosomal protein S7"/>
    <property type="match status" value="1"/>
</dbReference>
<dbReference type="Gene3D" id="1.10.455.10">
    <property type="entry name" value="Ribosomal protein S7 domain"/>
    <property type="match status" value="1"/>
</dbReference>
<dbReference type="HAMAP" id="MF_00480_B">
    <property type="entry name" value="Ribosomal_uS7_B"/>
    <property type="match status" value="1"/>
</dbReference>
<dbReference type="InterPro" id="IPR000235">
    <property type="entry name" value="Ribosomal_uS7"/>
</dbReference>
<dbReference type="InterPro" id="IPR005717">
    <property type="entry name" value="Ribosomal_uS7_bac/org-type"/>
</dbReference>
<dbReference type="InterPro" id="IPR020606">
    <property type="entry name" value="Ribosomal_uS7_CS"/>
</dbReference>
<dbReference type="InterPro" id="IPR023798">
    <property type="entry name" value="Ribosomal_uS7_dom"/>
</dbReference>
<dbReference type="InterPro" id="IPR036823">
    <property type="entry name" value="Ribosomal_uS7_dom_sf"/>
</dbReference>
<dbReference type="NCBIfam" id="TIGR01029">
    <property type="entry name" value="rpsG_bact"/>
    <property type="match status" value="1"/>
</dbReference>
<dbReference type="PANTHER" id="PTHR11205">
    <property type="entry name" value="RIBOSOMAL PROTEIN S7"/>
    <property type="match status" value="1"/>
</dbReference>
<dbReference type="Pfam" id="PF00177">
    <property type="entry name" value="Ribosomal_S7"/>
    <property type="match status" value="1"/>
</dbReference>
<dbReference type="PIRSF" id="PIRSF002122">
    <property type="entry name" value="RPS7p_RPS7a_RPS5e_RPS7o"/>
    <property type="match status" value="1"/>
</dbReference>
<dbReference type="SUPFAM" id="SSF47973">
    <property type="entry name" value="Ribosomal protein S7"/>
    <property type="match status" value="1"/>
</dbReference>
<dbReference type="PROSITE" id="PS00052">
    <property type="entry name" value="RIBOSOMAL_S7"/>
    <property type="match status" value="1"/>
</dbReference>
<organism>
    <name type="scientific">Oenothera biennis</name>
    <name type="common">German evening primrose</name>
    <name type="synonym">Onagra biennis</name>
    <dbReference type="NCBI Taxonomy" id="3942"/>
    <lineage>
        <taxon>Eukaryota</taxon>
        <taxon>Viridiplantae</taxon>
        <taxon>Streptophyta</taxon>
        <taxon>Embryophyta</taxon>
        <taxon>Tracheophyta</taxon>
        <taxon>Spermatophyta</taxon>
        <taxon>Magnoliopsida</taxon>
        <taxon>eudicotyledons</taxon>
        <taxon>Gunneridae</taxon>
        <taxon>Pentapetalae</taxon>
        <taxon>rosids</taxon>
        <taxon>malvids</taxon>
        <taxon>Myrtales</taxon>
        <taxon>Onagraceae</taxon>
        <taxon>Onagroideae</taxon>
        <taxon>Onagreae</taxon>
        <taxon>Oenothera</taxon>
    </lineage>
</organism>